<evidence type="ECO:0000255" key="1">
    <source>
        <dbReference type="HAMAP-Rule" id="MF_01954"/>
    </source>
</evidence>
<comment type="catalytic activity">
    <reaction evidence="1">
        <text>urea + 2 H2O + H(+) = hydrogencarbonate + 2 NH4(+)</text>
        <dbReference type="Rhea" id="RHEA:20557"/>
        <dbReference type="ChEBI" id="CHEBI:15377"/>
        <dbReference type="ChEBI" id="CHEBI:15378"/>
        <dbReference type="ChEBI" id="CHEBI:16199"/>
        <dbReference type="ChEBI" id="CHEBI:17544"/>
        <dbReference type="ChEBI" id="CHEBI:28938"/>
        <dbReference type="EC" id="3.5.1.5"/>
    </reaction>
</comment>
<comment type="pathway">
    <text evidence="1">Nitrogen metabolism; urea degradation; CO(2) and NH(3) from urea (urease route): step 1/1.</text>
</comment>
<comment type="subunit">
    <text evidence="1">Heterotrimer of UreA (gamma), UreB (beta) and UreC (alpha) subunits. Three heterotrimers associate to form the active enzyme.</text>
</comment>
<comment type="subcellular location">
    <subcellularLocation>
        <location evidence="1">Cytoplasm</location>
    </subcellularLocation>
</comment>
<comment type="similarity">
    <text evidence="1">Belongs to the urease beta subunit family.</text>
</comment>
<proteinExistence type="inferred from homology"/>
<accession>P0C1D5</accession>
<accession>Q57F86</accession>
<accession>Q93T82</accession>
<reference key="1">
    <citation type="journal article" date="2005" name="J. Bacteriol.">
        <title>Completion of the genome sequence of Brucella abortus and comparison to the highly similar genomes of Brucella melitensis and Brucella suis.</title>
        <authorList>
            <person name="Halling S.M."/>
            <person name="Peterson-Burch B.D."/>
            <person name="Bricker B.J."/>
            <person name="Zuerner R.L."/>
            <person name="Qing Z."/>
            <person name="Li L.-L."/>
            <person name="Kapur V."/>
            <person name="Alt D.P."/>
            <person name="Olsen S.C."/>
        </authorList>
    </citation>
    <scope>NUCLEOTIDE SEQUENCE [LARGE SCALE GENOMIC DNA]</scope>
    <source>
        <strain>9-941</strain>
    </source>
</reference>
<feature type="chain" id="PRO_0000234232" description="Urease subunit beta 1">
    <location>
        <begin position="1"/>
        <end position="101"/>
    </location>
</feature>
<organism>
    <name type="scientific">Brucella abortus biovar 1 (strain 9-941)</name>
    <dbReference type="NCBI Taxonomy" id="262698"/>
    <lineage>
        <taxon>Bacteria</taxon>
        <taxon>Pseudomonadati</taxon>
        <taxon>Pseudomonadota</taxon>
        <taxon>Alphaproteobacteria</taxon>
        <taxon>Hyphomicrobiales</taxon>
        <taxon>Brucellaceae</taxon>
        <taxon>Brucella/Ochrobactrum group</taxon>
        <taxon>Brucella</taxon>
    </lineage>
</organism>
<sequence>MIPGEIITLEGDIELNQGQPTVTMRVANTGDRPIQVGSHFHFYEVNAALSFDREKARGQRLDIAAGTAVRFEPGQERDVTLVPIRGHREIYGFRQMIMGKL</sequence>
<protein>
    <recommendedName>
        <fullName evidence="1">Urease subunit beta 1</fullName>
        <ecNumber evidence="1">3.5.1.5</ecNumber>
    </recommendedName>
    <alternativeName>
        <fullName evidence="1">Urea amidohydrolase subunit beta 1</fullName>
    </alternativeName>
</protein>
<keyword id="KW-0963">Cytoplasm</keyword>
<keyword id="KW-0378">Hydrolase</keyword>
<dbReference type="EC" id="3.5.1.5" evidence="1"/>
<dbReference type="EMBL" id="AE017223">
    <property type="protein sequence ID" value="AAX73698.1"/>
    <property type="molecule type" value="Genomic_DNA"/>
</dbReference>
<dbReference type="RefSeq" id="WP_002963433.1">
    <property type="nucleotide sequence ID" value="NC_006932.1"/>
</dbReference>
<dbReference type="SMR" id="P0C1D5"/>
<dbReference type="EnsemblBacteria" id="AAX73698">
    <property type="protein sequence ID" value="AAX73698"/>
    <property type="gene ID" value="BruAb1_0295"/>
</dbReference>
<dbReference type="KEGG" id="bmb:BruAb1_0295"/>
<dbReference type="HOGENOM" id="CLU_129707_1_1_5"/>
<dbReference type="UniPathway" id="UPA00258">
    <property type="reaction ID" value="UER00370"/>
</dbReference>
<dbReference type="Proteomes" id="UP000000540">
    <property type="component" value="Chromosome I"/>
</dbReference>
<dbReference type="GO" id="GO:0035550">
    <property type="term" value="C:urease complex"/>
    <property type="evidence" value="ECO:0007669"/>
    <property type="project" value="InterPro"/>
</dbReference>
<dbReference type="GO" id="GO:0009039">
    <property type="term" value="F:urease activity"/>
    <property type="evidence" value="ECO:0007669"/>
    <property type="project" value="UniProtKB-UniRule"/>
</dbReference>
<dbReference type="GO" id="GO:0043419">
    <property type="term" value="P:urea catabolic process"/>
    <property type="evidence" value="ECO:0007669"/>
    <property type="project" value="UniProtKB-UniRule"/>
</dbReference>
<dbReference type="CDD" id="cd00407">
    <property type="entry name" value="Urease_beta"/>
    <property type="match status" value="1"/>
</dbReference>
<dbReference type="FunFam" id="2.10.150.10:FF:000001">
    <property type="entry name" value="Urease subunit beta"/>
    <property type="match status" value="1"/>
</dbReference>
<dbReference type="Gene3D" id="2.10.150.10">
    <property type="entry name" value="Urease, beta subunit"/>
    <property type="match status" value="1"/>
</dbReference>
<dbReference type="HAMAP" id="MF_01954">
    <property type="entry name" value="Urease_beta"/>
    <property type="match status" value="1"/>
</dbReference>
<dbReference type="InterPro" id="IPR002019">
    <property type="entry name" value="Urease_beta-like"/>
</dbReference>
<dbReference type="InterPro" id="IPR036461">
    <property type="entry name" value="Urease_betasu_sf"/>
</dbReference>
<dbReference type="InterPro" id="IPR050069">
    <property type="entry name" value="Urease_subunit"/>
</dbReference>
<dbReference type="NCBIfam" id="NF009682">
    <property type="entry name" value="PRK13203.1"/>
    <property type="match status" value="1"/>
</dbReference>
<dbReference type="NCBIfam" id="TIGR00192">
    <property type="entry name" value="urease_beta"/>
    <property type="match status" value="1"/>
</dbReference>
<dbReference type="PANTHER" id="PTHR33569">
    <property type="entry name" value="UREASE"/>
    <property type="match status" value="1"/>
</dbReference>
<dbReference type="PANTHER" id="PTHR33569:SF1">
    <property type="entry name" value="UREASE"/>
    <property type="match status" value="1"/>
</dbReference>
<dbReference type="Pfam" id="PF00699">
    <property type="entry name" value="Urease_beta"/>
    <property type="match status" value="1"/>
</dbReference>
<dbReference type="SUPFAM" id="SSF51278">
    <property type="entry name" value="Urease, beta-subunit"/>
    <property type="match status" value="1"/>
</dbReference>
<gene>
    <name evidence="1" type="primary">ureB1</name>
    <name type="ordered locus">BruAb1_0295</name>
</gene>
<name>URE21_BRUAB</name>